<organism>
    <name type="scientific">Staphylococcus carnosus</name>
    <dbReference type="NCBI Taxonomy" id="1281"/>
    <lineage>
        <taxon>Bacteria</taxon>
        <taxon>Bacillati</taxon>
        <taxon>Bacillota</taxon>
        <taxon>Bacilli</taxon>
        <taxon>Bacillales</taxon>
        <taxon>Staphylococcaceae</taxon>
        <taxon>Staphylococcus</taxon>
    </lineage>
</organism>
<dbReference type="EC" id="2.7.1.197" evidence="1"/>
<dbReference type="EMBL" id="X56333">
    <property type="protein sequence ID" value="CAA39769.1"/>
    <property type="molecule type" value="Genomic_DNA"/>
</dbReference>
<dbReference type="PIR" id="S68193">
    <property type="entry name" value="S22385"/>
</dbReference>
<dbReference type="SMR" id="P28008"/>
<dbReference type="iPTMnet" id="P28008"/>
<dbReference type="GO" id="GO:0005886">
    <property type="term" value="C:plasma membrane"/>
    <property type="evidence" value="ECO:0007669"/>
    <property type="project" value="UniProtKB-SubCell"/>
</dbReference>
<dbReference type="GO" id="GO:0022872">
    <property type="term" value="F:protein-N(PI)-phosphohistidine-mannitol phosphotransferase system transmembrane transporter activity"/>
    <property type="evidence" value="ECO:0007669"/>
    <property type="project" value="InterPro"/>
</dbReference>
<dbReference type="GO" id="GO:0090563">
    <property type="term" value="F:protein-phosphocysteine-sugar phosphotransferase activity"/>
    <property type="evidence" value="ECO:0007669"/>
    <property type="project" value="TreeGrafter"/>
</dbReference>
<dbReference type="GO" id="GO:0009401">
    <property type="term" value="P:phosphoenolpyruvate-dependent sugar phosphotransferase system"/>
    <property type="evidence" value="ECO:0007669"/>
    <property type="project" value="UniProtKB-KW"/>
</dbReference>
<dbReference type="CDD" id="cd05567">
    <property type="entry name" value="PTS_IIB_mannitol"/>
    <property type="match status" value="1"/>
</dbReference>
<dbReference type="FunFam" id="3.40.50.2300:FF:000047">
    <property type="entry name" value="PTS system mannitol-specific transporter subunit IICBA"/>
    <property type="match status" value="1"/>
</dbReference>
<dbReference type="Gene3D" id="3.40.50.2300">
    <property type="match status" value="1"/>
</dbReference>
<dbReference type="InterPro" id="IPR036095">
    <property type="entry name" value="PTS_EIIB-like_sf"/>
</dbReference>
<dbReference type="InterPro" id="IPR013011">
    <property type="entry name" value="PTS_EIIB_2"/>
</dbReference>
<dbReference type="InterPro" id="IPR003501">
    <property type="entry name" value="PTS_EIIB_2/3"/>
</dbReference>
<dbReference type="InterPro" id="IPR029503">
    <property type="entry name" value="PTS_EIIB_mannitol"/>
</dbReference>
<dbReference type="InterPro" id="IPR003352">
    <property type="entry name" value="PTS_EIIC"/>
</dbReference>
<dbReference type="InterPro" id="IPR013014">
    <property type="entry name" value="PTS_EIIC_2"/>
</dbReference>
<dbReference type="InterPro" id="IPR004718">
    <property type="entry name" value="PTS_IIC_mtl"/>
</dbReference>
<dbReference type="InterPro" id="IPR050893">
    <property type="entry name" value="Sugar_PTS"/>
</dbReference>
<dbReference type="NCBIfam" id="TIGR00851">
    <property type="entry name" value="mtlA"/>
    <property type="match status" value="1"/>
</dbReference>
<dbReference type="PANTHER" id="PTHR30181">
    <property type="entry name" value="MANNITOL PERMEASE IIC COMPONENT"/>
    <property type="match status" value="1"/>
</dbReference>
<dbReference type="PANTHER" id="PTHR30181:SF2">
    <property type="entry name" value="PTS SYSTEM MANNITOL-SPECIFIC EIICBA COMPONENT"/>
    <property type="match status" value="1"/>
</dbReference>
<dbReference type="Pfam" id="PF02378">
    <property type="entry name" value="PTS_EIIC"/>
    <property type="match status" value="1"/>
</dbReference>
<dbReference type="Pfam" id="PF02302">
    <property type="entry name" value="PTS_IIB"/>
    <property type="match status" value="1"/>
</dbReference>
<dbReference type="SUPFAM" id="SSF52794">
    <property type="entry name" value="PTS system IIB component-like"/>
    <property type="match status" value="1"/>
</dbReference>
<dbReference type="PROSITE" id="PS51099">
    <property type="entry name" value="PTS_EIIB_TYPE_2"/>
    <property type="match status" value="1"/>
</dbReference>
<dbReference type="PROSITE" id="PS51104">
    <property type="entry name" value="PTS_EIIC_TYPE_2"/>
    <property type="match status" value="1"/>
</dbReference>
<proteinExistence type="evidence at protein level"/>
<gene>
    <name evidence="7" type="primary">mtlA</name>
</gene>
<protein>
    <recommendedName>
        <fullName evidence="7">PTS system mannitol-specific EIICB component</fullName>
    </recommendedName>
    <alternativeName>
        <fullName evidence="7">EIICB-Mtl</fullName>
        <shortName evidence="7">EII-Mtl</shortName>
    </alternativeName>
    <domain>
        <recommendedName>
            <fullName evidence="7">Mannitol permease IIC component</fullName>
        </recommendedName>
        <alternativeName>
            <fullName evidence="7">PTS system mannitol-specific EIIC component</fullName>
        </alternativeName>
    </domain>
    <domain>
        <recommendedName>
            <fullName evidence="7">Mannitol-specific phosphotransferase enzyme IIB component</fullName>
            <ecNumber evidence="1">2.7.1.197</ecNumber>
        </recommendedName>
        <alternativeName>
            <fullName evidence="7">PTS system mannitol-specific EIIB component</fullName>
        </alternativeName>
    </domain>
</protein>
<keyword id="KW-1003">Cell membrane</keyword>
<keyword id="KW-0903">Direct protein sequencing</keyword>
<keyword id="KW-0472">Membrane</keyword>
<keyword id="KW-0597">Phosphoprotein</keyword>
<keyword id="KW-0598">Phosphotransferase system</keyword>
<keyword id="KW-0762">Sugar transport</keyword>
<keyword id="KW-0808">Transferase</keyword>
<keyword id="KW-0812">Transmembrane</keyword>
<keyword id="KW-1133">Transmembrane helix</keyword>
<keyword id="KW-0813">Transport</keyword>
<feature type="chain" id="PRO_0000186626" description="PTS system mannitol-specific EIICB component">
    <location>
        <begin position="1"/>
        <end position="518"/>
    </location>
</feature>
<feature type="topological domain" description="Cytoplasmic" evidence="1">
    <location>
        <begin position="1"/>
        <end position="31"/>
    </location>
</feature>
<feature type="transmembrane region" description="Helical" evidence="1">
    <location>
        <begin position="32"/>
        <end position="53"/>
    </location>
</feature>
<feature type="topological domain" description="Extracellular" evidence="1">
    <location>
        <begin position="54"/>
        <end position="57"/>
    </location>
</feature>
<feature type="transmembrane region" description="Helical" evidence="1">
    <location>
        <begin position="58"/>
        <end position="78"/>
    </location>
</feature>
<feature type="topological domain" description="Cytoplasmic" evidence="1">
    <location>
        <begin position="79"/>
        <end position="142"/>
    </location>
</feature>
<feature type="transmembrane region" description="Helical" evidence="1">
    <location>
        <begin position="143"/>
        <end position="164"/>
    </location>
</feature>
<feature type="topological domain" description="Extracellular" evidence="1">
    <location>
        <begin position="165"/>
        <end position="173"/>
    </location>
</feature>
<feature type="transmembrane region" description="Helical" evidence="1">
    <location>
        <begin position="174"/>
        <end position="194"/>
    </location>
</feature>
<feature type="topological domain" description="Cytoplasmic" evidence="1">
    <location>
        <begin position="195"/>
        <end position="281"/>
    </location>
</feature>
<feature type="transmembrane region" description="Helical" evidence="1">
    <location>
        <begin position="282"/>
        <end position="301"/>
    </location>
</feature>
<feature type="topological domain" description="Extracellular" evidence="1">
    <location>
        <begin position="302"/>
        <end position="321"/>
    </location>
</feature>
<feature type="transmembrane region" description="Helical" evidence="1">
    <location>
        <begin position="322"/>
        <end position="343"/>
    </location>
</feature>
<feature type="topological domain" description="Cytoplasmic" evidence="1">
    <location>
        <begin position="344"/>
        <end position="518"/>
    </location>
</feature>
<feature type="domain" description="PTS EIIC type-2" evidence="3">
    <location>
        <begin position="20"/>
        <end position="352"/>
    </location>
</feature>
<feature type="domain" description="PTS EIIB type-2" evidence="2">
    <location>
        <begin position="426"/>
        <end position="518"/>
    </location>
</feature>
<feature type="region of interest" description="Disordered" evidence="4">
    <location>
        <begin position="369"/>
        <end position="406"/>
    </location>
</feature>
<feature type="compositionally biased region" description="Basic and acidic residues" evidence="4">
    <location>
        <begin position="375"/>
        <end position="387"/>
    </location>
</feature>
<feature type="compositionally biased region" description="Low complexity" evidence="4">
    <location>
        <begin position="388"/>
        <end position="398"/>
    </location>
</feature>
<feature type="active site" description="Phosphocysteine intermediate" evidence="9">
    <location>
        <position position="432"/>
    </location>
</feature>
<feature type="modified residue" description="Phosphocysteine; by EIIA" evidence="2 6">
    <location>
        <position position="432"/>
    </location>
</feature>
<sequence>MDTMSNSQQNKGIGRKVQAFGSFLSSMIMPNIGAFIAWGFIAAIFIDNGWFPNKDLAQLAGPMITYLIPLLIAFSGGRLIHDLRGGIIAATATMGVIVALPDTPMLLGAMIMGPLVGWLMKKTDEFVQPRTPQGFEMLFNNFSAGILGFIMTIFGFEVLAPIMKFIMHILSVGVEALVHAHLLPLVSILVEPAKIVFLNNAINHGVFTPLGADQAAHAGQSILYTIESNPGPGIGVLIAYMIFGKGTAKATSYGAGIIQFFGGIHEIYFPYVLMRPLLFVSVILGGMTGVATYSLLDFGFKTPASPGSIIVYAINAPKGEFLHMLTGVVLAALVSFVVSALILKFTKDPKQDLAEATAQMEATKGKKSSVASKLSAKDDNKAADNKTAETTTATAASNKAEDKDSDELLDDYNTEDVDAHNYNNVDHVIFACDAGMGSSAMGASMLRNKFKNAGLENIQVTNTAINQLPKNAQLVITQKKLTDRAIKQSPDAIHISVENFLNSPRYEELINNLKEDQD</sequence>
<accession>P28008</accession>
<name>PTMCB_STACA</name>
<comment type="function">
    <text evidence="5 9">The phosphoenolpyruvate-dependent sugar phosphotransferase system (sugar PTS), a major carbohydrate active transport system, catalyzes the phosphorylation of incoming sugar substrates concomitantly with their translocation across the cell membrane. The enzyme II CmtAB PTS system is involved in D-mannitol transport.</text>
</comment>
<comment type="catalytic activity">
    <reaction evidence="1 8">
        <text>D-mannitol(out) + N(pros)-phospho-L-histidyl-[protein] = D-mannitol 1-phosphate(in) + L-histidyl-[protein]</text>
        <dbReference type="Rhea" id="RHEA:33363"/>
        <dbReference type="Rhea" id="RHEA-COMP:9745"/>
        <dbReference type="Rhea" id="RHEA-COMP:9746"/>
        <dbReference type="ChEBI" id="CHEBI:16899"/>
        <dbReference type="ChEBI" id="CHEBI:29979"/>
        <dbReference type="ChEBI" id="CHEBI:61381"/>
        <dbReference type="ChEBI" id="CHEBI:64837"/>
        <dbReference type="EC" id="2.7.1.197"/>
    </reaction>
</comment>
<comment type="subunit">
    <text evidence="9">Homodimer.</text>
</comment>
<comment type="subcellular location">
    <subcellularLocation>
        <location evidence="3 8">Cell membrane</location>
        <topology evidence="3">Multi-pass membrane protein</topology>
    </subcellularLocation>
</comment>
<comment type="domain">
    <text evidence="3">The EIIC type-2 domain forms the PTS system translocation channel and contains the specific substrate-binding site.</text>
</comment>
<comment type="domain">
    <text evidence="2">The PTS EIIB type-2 domain is phosphorylated by phospho-EIIA on a cysteinyl residue. Then, it transfers the phosphoryl group to the sugar substrate concomitantly with the sugar uptake processed by the PTS EIIC type-2 domain.</text>
</comment>
<evidence type="ECO:0000250" key="1">
    <source>
        <dbReference type="UniProtKB" id="P00550"/>
    </source>
</evidence>
<evidence type="ECO:0000255" key="2">
    <source>
        <dbReference type="PROSITE-ProRule" id="PRU00422"/>
    </source>
</evidence>
<evidence type="ECO:0000255" key="3">
    <source>
        <dbReference type="PROSITE-ProRule" id="PRU00427"/>
    </source>
</evidence>
<evidence type="ECO:0000256" key="4">
    <source>
        <dbReference type="SAM" id="MobiDB-lite"/>
    </source>
</evidence>
<evidence type="ECO:0000269" key="5">
    <source>
    </source>
</evidence>
<evidence type="ECO:0000269" key="6">
    <source>
    </source>
</evidence>
<evidence type="ECO:0000303" key="7">
    <source>
    </source>
</evidence>
<evidence type="ECO:0000305" key="8">
    <source>
    </source>
</evidence>
<evidence type="ECO:0000305" key="9">
    <source>
    </source>
</evidence>
<reference key="1">
    <citation type="journal article" date="1992" name="Eur. J. Biochem.">
        <title>Mannitol-specific enzyme II of the phosphoenolpyruvate-dependent phosphotransferase system of Staphylococcus carnosus. Sequence and expression in Escherichia coli and structural comparison with the enzyme IImannitol of Escherichia coli.</title>
        <authorList>
            <person name="Fischer R."/>
            <person name="Hengstenberg W."/>
        </authorList>
    </citation>
    <scope>NUCLEOTIDE SEQUENCE [GENOMIC DNA]</scope>
    <scope>FUNCTION</scope>
    <scope>CATALYTIC ACTIVITY</scope>
    <scope>SUBCELLULAR LOCATION</scope>
</reference>
<reference key="2">
    <citation type="submission" date="1995-01" db="EMBL/GenBank/DDBJ databases">
        <authorList>
            <person name="Hengstenberg W."/>
        </authorList>
    </citation>
    <scope>SEQUENCE REVISION</scope>
</reference>
<reference key="3">
    <citation type="journal article" date="1995" name="Eur. J. Biochem.">
        <title>Expression, purification and characterization of the enzyme II mannitol-specific domain from Staphylococcus carnosus and determination of the active-site cysteine residue.</title>
        <authorList>
            <person name="Pogge von Strandmann R."/>
            <person name="Weigt C."/>
            <person name="Fischer R."/>
            <person name="Meyer H.E."/>
            <person name="Kalbitzer H.R."/>
            <person name="Hengstenberg W."/>
        </authorList>
    </citation>
    <scope>PROTEIN SEQUENCE OF 504-518</scope>
    <scope>FUNCTION</scope>
    <scope>SUBUNIT</scope>
    <scope>ACTIVE SITE</scope>
    <scope>PHOSPHORYLATION AT CYS-432</scope>
</reference>